<protein>
    <recommendedName>
        <fullName>Acidic leucine-rich nuclear phosphoprotein 32 family member A</fullName>
    </recommendedName>
</protein>
<name>AN32A_DROPS</name>
<proteinExistence type="inferred from homology"/>
<dbReference type="EMBL" id="CM000071">
    <property type="protein sequence ID" value="EAL26374.2"/>
    <property type="molecule type" value="Genomic_DNA"/>
</dbReference>
<dbReference type="RefSeq" id="XP_001361795.2">
    <property type="nucleotide sequence ID" value="XM_001361758.4"/>
</dbReference>
<dbReference type="SMR" id="Q28XE2"/>
<dbReference type="FunCoup" id="Q28XE2">
    <property type="interactions" value="2161"/>
</dbReference>
<dbReference type="STRING" id="46245.Q28XE2"/>
<dbReference type="EnsemblMetazoa" id="FBtr0277521">
    <property type="protein sequence ID" value="FBpp0275959"/>
    <property type="gene ID" value="FBgn0079123"/>
</dbReference>
<dbReference type="GeneID" id="4805386"/>
<dbReference type="KEGG" id="dpo:4805386"/>
<dbReference type="CTD" id="37043"/>
<dbReference type="HOGENOM" id="CLU_063314_1_0_1"/>
<dbReference type="InParanoid" id="Q28XE2"/>
<dbReference type="ChiTaRS" id="Mapmodulin">
    <property type="organism name" value="fly"/>
</dbReference>
<dbReference type="Proteomes" id="UP000001819">
    <property type="component" value="Chromosome 3"/>
</dbReference>
<dbReference type="Bgee" id="FBgn0079123">
    <property type="expression patterns" value="Expressed in female reproductive system and 2 other cell types or tissues"/>
</dbReference>
<dbReference type="GO" id="GO:0005737">
    <property type="term" value="C:cytoplasm"/>
    <property type="evidence" value="ECO:0000250"/>
    <property type="project" value="UniProtKB"/>
</dbReference>
<dbReference type="GO" id="GO:0005783">
    <property type="term" value="C:endoplasmic reticulum"/>
    <property type="evidence" value="ECO:0000250"/>
    <property type="project" value="UniProtKB"/>
</dbReference>
<dbReference type="GO" id="GO:0005634">
    <property type="term" value="C:nucleus"/>
    <property type="evidence" value="ECO:0000250"/>
    <property type="project" value="UniProtKB"/>
</dbReference>
<dbReference type="GO" id="GO:0048471">
    <property type="term" value="C:perinuclear region of cytoplasm"/>
    <property type="evidence" value="ECO:0000250"/>
    <property type="project" value="UniProtKB"/>
</dbReference>
<dbReference type="GO" id="GO:0042393">
    <property type="term" value="F:histone binding"/>
    <property type="evidence" value="ECO:0007669"/>
    <property type="project" value="TreeGrafter"/>
</dbReference>
<dbReference type="GO" id="GO:0006913">
    <property type="term" value="P:nucleocytoplasmic transport"/>
    <property type="evidence" value="ECO:0000250"/>
    <property type="project" value="UniProtKB"/>
</dbReference>
<dbReference type="FunFam" id="3.80.10.10:FF:000003">
    <property type="entry name" value="Acidic leucine-rich nuclear phosphoprotein 32 family member A"/>
    <property type="match status" value="1"/>
</dbReference>
<dbReference type="Gene3D" id="3.80.10.10">
    <property type="entry name" value="Ribonuclease Inhibitor"/>
    <property type="match status" value="1"/>
</dbReference>
<dbReference type="InterPro" id="IPR045081">
    <property type="entry name" value="AN32"/>
</dbReference>
<dbReference type="InterPro" id="IPR001611">
    <property type="entry name" value="Leu-rich_rpt"/>
</dbReference>
<dbReference type="InterPro" id="IPR032675">
    <property type="entry name" value="LRR_dom_sf"/>
</dbReference>
<dbReference type="PANTHER" id="PTHR11375">
    <property type="entry name" value="ACIDIC LEUCINE-RICH NUCLEAR PHOSPHOPROTEIN 32"/>
    <property type="match status" value="1"/>
</dbReference>
<dbReference type="PANTHER" id="PTHR11375:SF0">
    <property type="entry name" value="ACIDIC LEUCINE-RICH NUCLEAR PHOSPHOPROTEIN 32 FAMILY MEMBER A"/>
    <property type="match status" value="1"/>
</dbReference>
<dbReference type="Pfam" id="PF14580">
    <property type="entry name" value="LRR_9"/>
    <property type="match status" value="1"/>
</dbReference>
<dbReference type="SUPFAM" id="SSF52058">
    <property type="entry name" value="L domain-like"/>
    <property type="match status" value="1"/>
</dbReference>
<dbReference type="PROSITE" id="PS51450">
    <property type="entry name" value="LRR"/>
    <property type="match status" value="5"/>
</dbReference>
<evidence type="ECO:0000250" key="1"/>
<evidence type="ECO:0000256" key="2">
    <source>
        <dbReference type="SAM" id="MobiDB-lite"/>
    </source>
</evidence>
<evidence type="ECO:0000305" key="3"/>
<sequence length="263" mass="29266">MEKRIELERRARKANQIQELNLDNCRSTSIVGLTDEYTALESLSLINVGLTTLKGFPKLPNLKKLELSDNRISSGLNYLTTSPKLQYLNLSGNKIKDLETLKPLEEFKSLAVLDLFNNDATQVDNYREKIFKMLPSLNFLDGFDCNDEEAQSEGDDDEEVNGNDSEEEVSGDDDEEDGDSDDSDEDGDNGEVSLSEVYNDDLEEDNSDWEEGEGGGDDDEEDSDIDDADGEANESSASLNASKKEPEKTDESQARGKKRKHDG</sequence>
<keyword id="KW-0963">Cytoplasm</keyword>
<keyword id="KW-0433">Leucine-rich repeat</keyword>
<keyword id="KW-0539">Nucleus</keyword>
<keyword id="KW-0597">Phosphoprotein</keyword>
<keyword id="KW-1185">Reference proteome</keyword>
<keyword id="KW-0677">Repeat</keyword>
<accession>Q28XE2</accession>
<organism>
    <name type="scientific">Drosophila pseudoobscura pseudoobscura</name>
    <name type="common">Fruit fly</name>
    <dbReference type="NCBI Taxonomy" id="46245"/>
    <lineage>
        <taxon>Eukaryota</taxon>
        <taxon>Metazoa</taxon>
        <taxon>Ecdysozoa</taxon>
        <taxon>Arthropoda</taxon>
        <taxon>Hexapoda</taxon>
        <taxon>Insecta</taxon>
        <taxon>Pterygota</taxon>
        <taxon>Neoptera</taxon>
        <taxon>Endopterygota</taxon>
        <taxon>Diptera</taxon>
        <taxon>Brachycera</taxon>
        <taxon>Muscomorpha</taxon>
        <taxon>Ephydroidea</taxon>
        <taxon>Drosophilidae</taxon>
        <taxon>Drosophila</taxon>
        <taxon>Sophophora</taxon>
    </lineage>
</organism>
<comment type="function">
    <text evidence="1">Implicated in a number of cellular processes, including proliferation, differentiation, caspase-dependent and caspase-independent apoptosis, suppression of transformation (tumor suppressor), inhibition of protein phosphatase 2A, regulation of mRNA trafficking and stability, and inhibition of acetyltransferases as part of the INHAT (inhibitor of histone acetyltransferases) complex.</text>
</comment>
<comment type="subcellular location">
    <subcellularLocation>
        <location>Nucleus</location>
    </subcellularLocation>
    <subcellularLocation>
        <location>Cytoplasm</location>
    </subcellularLocation>
    <text evidence="1">Shuttles between nucleus and cytoplasm.</text>
</comment>
<comment type="PTM">
    <text evidence="1">Phosphorylated on serine residues.</text>
</comment>
<comment type="similarity">
    <text evidence="3">Belongs to the ANP32 family.</text>
</comment>
<gene>
    <name type="primary">Anp32a</name>
    <name type="synonym">Mapmodulin</name>
    <name type="ORF">GA19125</name>
</gene>
<feature type="chain" id="PRO_0000240189" description="Acidic leucine-rich nuclear phosphoprotein 32 family member A">
    <location>
        <begin position="1"/>
        <end position="263"/>
    </location>
</feature>
<feature type="repeat" description="LRR 1">
    <location>
        <begin position="16"/>
        <end position="37"/>
    </location>
</feature>
<feature type="repeat" description="LRR 2">
    <location>
        <begin position="39"/>
        <end position="60"/>
    </location>
</feature>
<feature type="repeat" description="LRR 3">
    <location>
        <begin position="61"/>
        <end position="83"/>
    </location>
</feature>
<feature type="repeat" description="LRR 4">
    <location>
        <begin position="84"/>
        <end position="105"/>
    </location>
</feature>
<feature type="domain" description="LRRCT">
    <location>
        <begin position="118"/>
        <end position="156"/>
    </location>
</feature>
<feature type="region of interest" description="Disordered" evidence="2">
    <location>
        <begin position="144"/>
        <end position="263"/>
    </location>
</feature>
<feature type="compositionally biased region" description="Acidic residues" evidence="2">
    <location>
        <begin position="144"/>
        <end position="189"/>
    </location>
</feature>
<feature type="compositionally biased region" description="Acidic residues" evidence="2">
    <location>
        <begin position="198"/>
        <end position="232"/>
    </location>
</feature>
<feature type="compositionally biased region" description="Basic and acidic residues" evidence="2">
    <location>
        <begin position="242"/>
        <end position="254"/>
    </location>
</feature>
<reference key="1">
    <citation type="journal article" date="2005" name="Genome Res.">
        <title>Comparative genome sequencing of Drosophila pseudoobscura: chromosomal, gene, and cis-element evolution.</title>
        <authorList>
            <person name="Richards S."/>
            <person name="Liu Y."/>
            <person name="Bettencourt B.R."/>
            <person name="Hradecky P."/>
            <person name="Letovsky S."/>
            <person name="Nielsen R."/>
            <person name="Thornton K."/>
            <person name="Hubisz M.J."/>
            <person name="Chen R."/>
            <person name="Meisel R.P."/>
            <person name="Couronne O."/>
            <person name="Hua S."/>
            <person name="Smith M.A."/>
            <person name="Zhang P."/>
            <person name="Liu J."/>
            <person name="Bussemaker H.J."/>
            <person name="van Batenburg M.F."/>
            <person name="Howells S.L."/>
            <person name="Scherer S.E."/>
            <person name="Sodergren E."/>
            <person name="Matthews B.B."/>
            <person name="Crosby M.A."/>
            <person name="Schroeder A.J."/>
            <person name="Ortiz-Barrientos D."/>
            <person name="Rives C.M."/>
            <person name="Metzker M.L."/>
            <person name="Muzny D.M."/>
            <person name="Scott G."/>
            <person name="Steffen D."/>
            <person name="Wheeler D.A."/>
            <person name="Worley K.C."/>
            <person name="Havlak P."/>
            <person name="Durbin K.J."/>
            <person name="Egan A."/>
            <person name="Gill R."/>
            <person name="Hume J."/>
            <person name="Morgan M.B."/>
            <person name="Miner G."/>
            <person name="Hamilton C."/>
            <person name="Huang Y."/>
            <person name="Waldron L."/>
            <person name="Verduzco D."/>
            <person name="Clerc-Blankenburg K.P."/>
            <person name="Dubchak I."/>
            <person name="Noor M.A.F."/>
            <person name="Anderson W."/>
            <person name="White K.P."/>
            <person name="Clark A.G."/>
            <person name="Schaeffer S.W."/>
            <person name="Gelbart W.M."/>
            <person name="Weinstock G.M."/>
            <person name="Gibbs R.A."/>
        </authorList>
    </citation>
    <scope>NUCLEOTIDE SEQUENCE [LARGE SCALE GENOMIC DNA]</scope>
    <source>
        <strain>MV2-25 / Tucson 14011-0121.94</strain>
    </source>
</reference>
<reference key="2">
    <citation type="journal article" date="2005" name="Cerebellum">
        <title>The Anp32 family of proteins containing leucine-rich repeats.</title>
        <authorList>
            <person name="Matilla A."/>
            <person name="Radrizzani M."/>
        </authorList>
    </citation>
    <scope>GENE FAMILY</scope>
    <scope>NOMENCLATURE</scope>
</reference>